<comment type="function">
    <text evidence="5">May function as a protein modifier covalently attached to lysine residues of substrate proteins. This may serve to target the modified proteins for degradation by proteasomes.</text>
</comment>
<comment type="PTM">
    <text evidence="4">May be modified by deamidation of its C-terminal glutamine to glutamate by the adjacently encoded deamidase. This could be a prerequisite to the subsequent conjugation, as shown in the other prokaryotic ubiquitin-like protein Pup.</text>
</comment>
<comment type="similarity">
    <text evidence="1">Belongs to the ubiquitin-like protein UBact family.</text>
</comment>
<dbReference type="EMBL" id="LBWF01000001">
    <property type="protein sequence ID" value="KKR02659.1"/>
    <property type="molecule type" value="Genomic_DNA"/>
</dbReference>
<dbReference type="SMR" id="A0A0G0MF47"/>
<dbReference type="Proteomes" id="UP000034845">
    <property type="component" value="Unassembled WGS sequence"/>
</dbReference>
<dbReference type="GO" id="GO:0031386">
    <property type="term" value="F:protein tag activity"/>
    <property type="evidence" value="ECO:0007669"/>
    <property type="project" value="UniProtKB-UniRule"/>
</dbReference>
<dbReference type="HAMAP" id="MF_02133">
    <property type="entry name" value="UBact"/>
    <property type="match status" value="1"/>
</dbReference>
<dbReference type="InterPro" id="IPR037543">
    <property type="entry name" value="UBact"/>
</dbReference>
<proteinExistence type="evidence at protein level"/>
<accession>A0A0G0MF47</accession>
<organism>
    <name type="scientific">Yanofskybacteria sp. (strain GW2011_GWA1_39_13)</name>
    <dbReference type="NCBI Taxonomy" id="1619019"/>
    <lineage>
        <taxon>Bacteria</taxon>
        <taxon>Candidatus Yanofskyibacteriota</taxon>
    </lineage>
</organism>
<name>UBACT_YANXG</name>
<evidence type="ECO:0000255" key="1">
    <source>
        <dbReference type="HAMAP-Rule" id="MF_02133"/>
    </source>
</evidence>
<evidence type="ECO:0000256" key="2">
    <source>
        <dbReference type="SAM" id="MobiDB-lite"/>
    </source>
</evidence>
<evidence type="ECO:0000303" key="3">
    <source>
    </source>
</evidence>
<evidence type="ECO:0000305" key="4"/>
<evidence type="ECO:0000305" key="5">
    <source>
    </source>
</evidence>
<evidence type="ECO:0000312" key="6">
    <source>
        <dbReference type="EMBL" id="KKR02659.1"/>
    </source>
</evidence>
<protein>
    <recommendedName>
        <fullName evidence="3">Prokaryotic ubiquitin-like protein UBact</fullName>
    </recommendedName>
</protein>
<sequence length="56" mass="6704">MPQDQQRKKQFDPNPNRDDSQRKTPVDKEIDDIIDEADEIVKRNKEQAKKKQPSRQ</sequence>
<feature type="chain" id="PRO_0000441773" description="Prokaryotic ubiquitin-like protein UBact">
    <location>
        <begin position="1"/>
        <end position="56"/>
    </location>
</feature>
<feature type="region of interest" description="Disordered" evidence="2">
    <location>
        <begin position="1"/>
        <end position="33"/>
    </location>
</feature>
<feature type="compositionally biased region" description="Basic and acidic residues" evidence="2">
    <location>
        <begin position="1"/>
        <end position="28"/>
    </location>
</feature>
<feature type="modified residue" description="Deamidated glutamine" evidence="5">
    <location>
        <position position="56"/>
    </location>
</feature>
<feature type="cross-link" description="Isoglutamyl lysine isopeptide (Gln-Lys) (interchain with K-? in acceptor proteins)" evidence="5">
    <location>
        <position position="56"/>
    </location>
</feature>
<keyword id="KW-1017">Isopeptide bond</keyword>
<keyword id="KW-0833">Ubl conjugation pathway</keyword>
<gene>
    <name evidence="3" type="primary">ubact</name>
    <name evidence="6" type="ORF">UT29_C0001G0139</name>
</gene>
<reference key="1">
    <citation type="journal article" date="2015" name="Nature">
        <title>rRNA introns, odd ribosomes, and small enigmatic genomes across a large radiation of phyla.</title>
        <authorList>
            <person name="Brown C.T."/>
            <person name="Hug L.A."/>
            <person name="Thomas B.C."/>
            <person name="Sharon I."/>
            <person name="Castelle C.J."/>
            <person name="Singh A."/>
            <person name="Wilkins M.J."/>
            <person name="Williams K.H."/>
            <person name="Banfield J.F."/>
        </authorList>
    </citation>
    <scope>NUCLEOTIDE SEQUENCE [LARGE SCALE GENOMIC DNA]</scope>
    <source>
        <strain>GW2011_GWA1_39_13</strain>
    </source>
</reference>
<reference key="2">
    <citation type="journal article" date="2017" name="Biochem. Biophys. Res. Commun.">
        <title>Identification of UBact, a ubiquitin-like protein, along with other homologous components of a conjugation system and the proteasome in different gram-negative bacteria.</title>
        <authorList>
            <person name="Lehmann G."/>
            <person name="Udasin R.G."/>
            <person name="Livneh I."/>
            <person name="Ciechanover A."/>
        </authorList>
    </citation>
    <scope>PREDICTED FUNCTION</scope>
    <scope>DEAMIDATION AT GLN-56</scope>
    <source>
        <strain>GW2011_GWA1_39_13</strain>
    </source>
</reference>